<keyword id="KW-0131">Cell cycle</keyword>
<keyword id="KW-0132">Cell division</keyword>
<keyword id="KW-0963">Cytoplasm</keyword>
<keyword id="KW-0717">Septation</keyword>
<feature type="chain" id="PRO_0000334107" description="Cell division protein SepF">
    <location>
        <begin position="1"/>
        <end position="218"/>
    </location>
</feature>
<feature type="region of interest" description="Disordered" evidence="2">
    <location>
        <begin position="25"/>
        <end position="115"/>
    </location>
</feature>
<feature type="compositionally biased region" description="Polar residues" evidence="2">
    <location>
        <begin position="29"/>
        <end position="43"/>
    </location>
</feature>
<feature type="compositionally biased region" description="Basic and acidic residues" evidence="2">
    <location>
        <begin position="47"/>
        <end position="63"/>
    </location>
</feature>
<feature type="compositionally biased region" description="Polar residues" evidence="2">
    <location>
        <begin position="102"/>
        <end position="115"/>
    </location>
</feature>
<sequence>MAFKDTFNKMISYFDTDEVNEVEEDVAASTDNVIPRSQQSVRASSHPKQEPRNNHVQQDHQARSQEQTRSQMHPKHGTSERYYQQSQPKEGHEMVDRRKRMSTSSIANRREQYQQSTCSDQTTIALKYPRKYEDAQEIVDLLIVNECVLIDFQFMLDAQARRCLDFIDGASKVLYGSLQKVGSSMYLLAPSNVSVNIEEMTIPHTTQDIGFDFDMKRR</sequence>
<gene>
    <name evidence="1" type="primary">sepF</name>
    <name type="ordered locus">SpyM50605</name>
</gene>
<organism>
    <name type="scientific">Streptococcus pyogenes serotype M5 (strain Manfredo)</name>
    <dbReference type="NCBI Taxonomy" id="160491"/>
    <lineage>
        <taxon>Bacteria</taxon>
        <taxon>Bacillati</taxon>
        <taxon>Bacillota</taxon>
        <taxon>Bacilli</taxon>
        <taxon>Lactobacillales</taxon>
        <taxon>Streptococcaceae</taxon>
        <taxon>Streptococcus</taxon>
    </lineage>
</organism>
<dbReference type="EMBL" id="AM295007">
    <property type="protein sequence ID" value="CAM29940.1"/>
    <property type="molecule type" value="Genomic_DNA"/>
</dbReference>
<dbReference type="RefSeq" id="WP_002995878.1">
    <property type="nucleotide sequence ID" value="NC_009332.1"/>
</dbReference>
<dbReference type="SMR" id="A2RDL5"/>
<dbReference type="KEGG" id="spf:SpyM50605"/>
<dbReference type="HOGENOM" id="CLU_078499_2_0_9"/>
<dbReference type="GO" id="GO:0005737">
    <property type="term" value="C:cytoplasm"/>
    <property type="evidence" value="ECO:0007669"/>
    <property type="project" value="UniProtKB-SubCell"/>
</dbReference>
<dbReference type="GO" id="GO:0000917">
    <property type="term" value="P:division septum assembly"/>
    <property type="evidence" value="ECO:0007669"/>
    <property type="project" value="UniProtKB-KW"/>
</dbReference>
<dbReference type="GO" id="GO:0043093">
    <property type="term" value="P:FtsZ-dependent cytokinesis"/>
    <property type="evidence" value="ECO:0007669"/>
    <property type="project" value="UniProtKB-UniRule"/>
</dbReference>
<dbReference type="Gene3D" id="3.30.110.150">
    <property type="entry name" value="SepF-like protein"/>
    <property type="match status" value="1"/>
</dbReference>
<dbReference type="HAMAP" id="MF_01197">
    <property type="entry name" value="SepF"/>
    <property type="match status" value="1"/>
</dbReference>
<dbReference type="InterPro" id="IPR023052">
    <property type="entry name" value="Cell_div_SepF"/>
</dbReference>
<dbReference type="InterPro" id="IPR007561">
    <property type="entry name" value="Cell_div_SepF/SepF-rel"/>
</dbReference>
<dbReference type="InterPro" id="IPR038594">
    <property type="entry name" value="SepF-like_sf"/>
</dbReference>
<dbReference type="PANTHER" id="PTHR35798">
    <property type="entry name" value="CELL DIVISION PROTEIN SEPF"/>
    <property type="match status" value="1"/>
</dbReference>
<dbReference type="PANTHER" id="PTHR35798:SF1">
    <property type="entry name" value="CELL DIVISION PROTEIN SEPF"/>
    <property type="match status" value="1"/>
</dbReference>
<dbReference type="Pfam" id="PF04472">
    <property type="entry name" value="SepF"/>
    <property type="match status" value="1"/>
</dbReference>
<name>SEPF_STRPG</name>
<evidence type="ECO:0000255" key="1">
    <source>
        <dbReference type="HAMAP-Rule" id="MF_01197"/>
    </source>
</evidence>
<evidence type="ECO:0000256" key="2">
    <source>
        <dbReference type="SAM" id="MobiDB-lite"/>
    </source>
</evidence>
<reference key="1">
    <citation type="journal article" date="2007" name="J. Bacteriol.">
        <title>Complete genome of acute rheumatic fever-associated serotype M5 Streptococcus pyogenes strain Manfredo.</title>
        <authorList>
            <person name="Holden M.T.G."/>
            <person name="Scott A."/>
            <person name="Cherevach I."/>
            <person name="Chillingworth T."/>
            <person name="Churcher C."/>
            <person name="Cronin A."/>
            <person name="Dowd L."/>
            <person name="Feltwell T."/>
            <person name="Hamlin N."/>
            <person name="Holroyd S."/>
            <person name="Jagels K."/>
            <person name="Moule S."/>
            <person name="Mungall K."/>
            <person name="Quail M.A."/>
            <person name="Price C."/>
            <person name="Rabbinowitsch E."/>
            <person name="Sharp S."/>
            <person name="Skelton J."/>
            <person name="Whitehead S."/>
            <person name="Barrell B.G."/>
            <person name="Kehoe M."/>
            <person name="Parkhill J."/>
        </authorList>
    </citation>
    <scope>NUCLEOTIDE SEQUENCE [LARGE SCALE GENOMIC DNA]</scope>
    <source>
        <strain>Manfredo</strain>
    </source>
</reference>
<proteinExistence type="inferred from homology"/>
<accession>A2RDL5</accession>
<comment type="function">
    <text evidence="1">Cell division protein that is part of the divisome complex and is recruited early to the Z-ring. Probably stimulates Z-ring formation, perhaps through the cross-linking of FtsZ protofilaments. Its function overlaps with FtsA.</text>
</comment>
<comment type="subunit">
    <text evidence="1">Homodimer. Interacts with FtsZ.</text>
</comment>
<comment type="subcellular location">
    <subcellularLocation>
        <location evidence="1">Cytoplasm</location>
    </subcellularLocation>
    <text evidence="1">Localizes to the division site, in a FtsZ-dependent manner.</text>
</comment>
<comment type="similarity">
    <text evidence="1">Belongs to the SepF family.</text>
</comment>
<protein>
    <recommendedName>
        <fullName evidence="1">Cell division protein SepF</fullName>
    </recommendedName>
</protein>